<comment type="function">
    <text>Fucosyltransferase which adds the fucose moiety of the nod factor on its terminal reducing N-acetylglucosamine end. Uses GDP-fucose as the donor group.</text>
</comment>
<comment type="similarity">
    <text evidence="1">Belongs to the glycosyltransferase 23 family.</text>
</comment>
<keyword id="KW-0328">Glycosyltransferase</keyword>
<keyword id="KW-0536">Nodulation</keyword>
<keyword id="KW-0614">Plasmid</keyword>
<keyword id="KW-1185">Reference proteome</keyword>
<keyword id="KW-0808">Transferase</keyword>
<gene>
    <name type="primary">nodZ</name>
    <name type="ordered locus">NGR_a00400</name>
    <name type="ORF">y4aH</name>
</gene>
<evidence type="ECO:0000255" key="1">
    <source>
        <dbReference type="PROSITE-ProRule" id="PRU00992"/>
    </source>
</evidence>
<organism>
    <name type="scientific">Sinorhizobium fredii (strain NBRC 101917 / NGR234)</name>
    <dbReference type="NCBI Taxonomy" id="394"/>
    <lineage>
        <taxon>Bacteria</taxon>
        <taxon>Pseudomonadati</taxon>
        <taxon>Pseudomonadota</taxon>
        <taxon>Alphaproteobacteria</taxon>
        <taxon>Hyphomicrobiales</taxon>
        <taxon>Rhizobiaceae</taxon>
        <taxon>Sinorhizobium/Ensifer group</taxon>
        <taxon>Sinorhizobium</taxon>
    </lineage>
</organism>
<reference key="1">
    <citation type="journal article" date="1997" name="Nature">
        <title>Molecular basis of symbiosis between Rhizobium and legumes.</title>
        <authorList>
            <person name="Freiberg C.A."/>
            <person name="Fellay R."/>
            <person name="Bairoch A."/>
            <person name="Broughton W.J."/>
            <person name="Rosenthal A."/>
            <person name="Perret X."/>
        </authorList>
    </citation>
    <scope>NUCLEOTIDE SEQUENCE [LARGE SCALE GENOMIC DNA]</scope>
    <source>
        <strain>NBRC 101917 / NGR234</strain>
    </source>
</reference>
<reference key="2">
    <citation type="journal article" date="2009" name="Appl. Environ. Microbiol.">
        <title>Rhizobium sp. strain NGR234 possesses a remarkable number of secretion systems.</title>
        <authorList>
            <person name="Schmeisser C."/>
            <person name="Liesegang H."/>
            <person name="Krysciak D."/>
            <person name="Bakkou N."/>
            <person name="Le Quere A."/>
            <person name="Wollherr A."/>
            <person name="Heinemeyer I."/>
            <person name="Morgenstern B."/>
            <person name="Pommerening-Roeser A."/>
            <person name="Flores M."/>
            <person name="Palacios R."/>
            <person name="Brenner S."/>
            <person name="Gottschalk G."/>
            <person name="Schmitz R.A."/>
            <person name="Broughton W.J."/>
            <person name="Perret X."/>
            <person name="Strittmatter A.W."/>
            <person name="Streit W.R."/>
        </authorList>
    </citation>
    <scope>NUCLEOTIDE SEQUENCE [LARGE SCALE GENOMIC DNA]</scope>
    <source>
        <strain>NBRC 101917 / NGR234</strain>
    </source>
</reference>
<proteinExistence type="inferred from homology"/>
<geneLocation type="plasmid">
    <name>sym pNGR234a</name>
</geneLocation>
<feature type="chain" id="PRO_0000096919" description="Nodulation protein Z">
    <location>
        <begin position="1"/>
        <end position="322"/>
    </location>
</feature>
<feature type="domain" description="GT23" evidence="1">
    <location>
        <begin position="1"/>
        <end position="314"/>
    </location>
</feature>
<accession>P55355</accession>
<dbReference type="EC" id="2.4.1.-"/>
<dbReference type="EMBL" id="U00090">
    <property type="protein sequence ID" value="AAB91605.1"/>
    <property type="molecule type" value="Genomic_DNA"/>
</dbReference>
<dbReference type="RefSeq" id="NP_443767.1">
    <property type="nucleotide sequence ID" value="NC_000914.2"/>
</dbReference>
<dbReference type="RefSeq" id="WP_010875082.1">
    <property type="nucleotide sequence ID" value="NC_000914.2"/>
</dbReference>
<dbReference type="SMR" id="P55355"/>
<dbReference type="CAZy" id="GT23">
    <property type="family name" value="Glycosyltransferase Family 23"/>
</dbReference>
<dbReference type="KEGG" id="rhi:NGR_a00400"/>
<dbReference type="eggNOG" id="ENOG503190F">
    <property type="taxonomic scope" value="Bacteria"/>
</dbReference>
<dbReference type="HOGENOM" id="CLU_846979_0_0_5"/>
<dbReference type="OrthoDB" id="7405520at2"/>
<dbReference type="Proteomes" id="UP000001054">
    <property type="component" value="Plasmid pNGR234a"/>
</dbReference>
<dbReference type="GO" id="GO:0016758">
    <property type="term" value="F:hexosyltransferase activity"/>
    <property type="evidence" value="ECO:0007669"/>
    <property type="project" value="InterPro"/>
</dbReference>
<dbReference type="GO" id="GO:0009312">
    <property type="term" value="P:oligosaccharide biosynthetic process"/>
    <property type="evidence" value="ECO:0007669"/>
    <property type="project" value="InterPro"/>
</dbReference>
<dbReference type="Gene3D" id="3.40.50.11340">
    <property type="match status" value="1"/>
</dbReference>
<dbReference type="Gene3D" id="3.40.50.11350">
    <property type="match status" value="1"/>
</dbReference>
<dbReference type="InterPro" id="IPR027350">
    <property type="entry name" value="GT23_dom"/>
</dbReference>
<dbReference type="InterPro" id="IPR008716">
    <property type="entry name" value="NodZ"/>
</dbReference>
<dbReference type="Pfam" id="PF05830">
    <property type="entry name" value="NodZ"/>
    <property type="match status" value="1"/>
</dbReference>
<dbReference type="PIRSF" id="PIRSF020513">
    <property type="entry name" value="6alphaFUT_NodZ"/>
    <property type="match status" value="1"/>
</dbReference>
<dbReference type="PROSITE" id="PS51659">
    <property type="entry name" value="GT23"/>
    <property type="match status" value="1"/>
</dbReference>
<sequence>MYNRYVLSRRRTGFGDCLWSLAAAWRYAQRTARTLAVDWRGSCYLDQPFTNAFPVFFEPIKDIAGVPFICDNRVNEFSFPGPFFPNWWNKPAIECVYRPDAQVFRERDELDELFQAQDDVEANTVVCDACLMWRCDEEAERQIFCSVKPRAEIQARIDAIYQEHFYGYSAIGVHVRHGNGEDVMDHAPYWADPDLAVHQVCTAINAAKALPHPKPVRVILCTDSARVLDQVSSRFPDLLTIPKSFRADQSGPLHSADLGVEGGISALVEMYLLGLCDTVIRFPPTSAFTRYARLSVPRVIEFDLNDPSRLVVIERSSTNTAS</sequence>
<protein>
    <recommendedName>
        <fullName>Nodulation protein Z</fullName>
        <ecNumber>2.4.1.-</ecNumber>
    </recommendedName>
</protein>
<name>NODZ_SINFN</name>